<sequence>MLKLPKGLKKKKKKSKKDQELFTEEELEQYKRDLKAKQEAAATKSDAGESDGASSDVEAHHEPVAFNSGLGSGSSSSILNAQQQLSDQNQGAAGGDEEWAKFKALTSGVDSILHKTQDELDRIKKESFYQRLPSAAEKKKQKEEEAARLEAEQQEREKQRLGQIEAQRDKLAEAVVQLSESEEEAGDYEADDIFATDYIEAITSGELQLAVVPDSPVLAEDGPDPFDTAYAEKVIVGADRAKGNKKLVSLGAAVEVLSGRVDREHAVALANPKRKLRKGIQNLLLSESIELADSEAELLAATSNAEPQHNLLDDLDEELSESSVPIDLSVSLHLHLIKHKQPVEEEEELEQKGRENQLLNPDLSEFDSLKDEEDDEFAELAAESLTKKEEVTVVSQVVLPVAQLPTEAFEAGSWAEFEEQSGQEPGKPKRPPPPVRPPTGPHIVPGAIYVSEDEEENPEDDPFNTNYAEQVIKKTTVLEEDDDFDPRAEEHATEPPFLAAPQRDLLAGSATDLSQVVPAPLAPTLSVDQEAEDFDPFDTSAVSALVQPKSTELRFLERELLNYSGLDGVTLKHSLSDQDFDPRADQKEPAAPQVKLEQKETDFDTAQRKSSLSLNIQAKSVGFLVPASDLLGAGNELGASKKPLTPYYAPSDNRLQEREREAEDVDPFDTSHVPEAKLSDIELKHIEKDLISVPANLRHSLSDPDFDPRAPPTPVPAEVLLAVEENINIKVLTPAQDRKKLTNSGGSGKSEEDIDPFDTSIAANLQPGQTELKLLENELLPETKTLVTDVLDVQSDAQELGLGDKVLTPSTHSRPSLPAQDIDPFDTSIAENLAPGEAEIKLLESELIER</sequence>
<reference key="1">
    <citation type="journal article" date="1996" name="Genetics">
        <title>The stoned locus of Drosophila melanogaster produces a dicistronic transcript and encodes two distinct polypeptides.</title>
        <authorList>
            <person name="Andrews J."/>
            <person name="Smith M."/>
            <person name="Merakovsky J."/>
            <person name="Coulson M."/>
            <person name="Hannan F."/>
            <person name="Kelly L.E."/>
        </authorList>
    </citation>
    <scope>NUCLEOTIDE SEQUENCE [MRNA]</scope>
    <source>
        <strain>Oregon-R</strain>
        <tissue>CNS</tissue>
    </source>
</reference>
<reference key="2">
    <citation type="journal article" date="2000" name="Science">
        <title>The genome sequence of Drosophila melanogaster.</title>
        <authorList>
            <person name="Adams M.D."/>
            <person name="Celniker S.E."/>
            <person name="Holt R.A."/>
            <person name="Evans C.A."/>
            <person name="Gocayne J.D."/>
            <person name="Amanatides P.G."/>
            <person name="Scherer S.E."/>
            <person name="Li P.W."/>
            <person name="Hoskins R.A."/>
            <person name="Galle R.F."/>
            <person name="George R.A."/>
            <person name="Lewis S.E."/>
            <person name="Richards S."/>
            <person name="Ashburner M."/>
            <person name="Henderson S.N."/>
            <person name="Sutton G.G."/>
            <person name="Wortman J.R."/>
            <person name="Yandell M.D."/>
            <person name="Zhang Q."/>
            <person name="Chen L.X."/>
            <person name="Brandon R.C."/>
            <person name="Rogers Y.-H.C."/>
            <person name="Blazej R.G."/>
            <person name="Champe M."/>
            <person name="Pfeiffer B.D."/>
            <person name="Wan K.H."/>
            <person name="Doyle C."/>
            <person name="Baxter E.G."/>
            <person name="Helt G."/>
            <person name="Nelson C.R."/>
            <person name="Miklos G.L.G."/>
            <person name="Abril J.F."/>
            <person name="Agbayani A."/>
            <person name="An H.-J."/>
            <person name="Andrews-Pfannkoch C."/>
            <person name="Baldwin D."/>
            <person name="Ballew R.M."/>
            <person name="Basu A."/>
            <person name="Baxendale J."/>
            <person name="Bayraktaroglu L."/>
            <person name="Beasley E.M."/>
            <person name="Beeson K.Y."/>
            <person name="Benos P.V."/>
            <person name="Berman B.P."/>
            <person name="Bhandari D."/>
            <person name="Bolshakov S."/>
            <person name="Borkova D."/>
            <person name="Botchan M.R."/>
            <person name="Bouck J."/>
            <person name="Brokstein P."/>
            <person name="Brottier P."/>
            <person name="Burtis K.C."/>
            <person name="Busam D.A."/>
            <person name="Butler H."/>
            <person name="Cadieu E."/>
            <person name="Center A."/>
            <person name="Chandra I."/>
            <person name="Cherry J.M."/>
            <person name="Cawley S."/>
            <person name="Dahlke C."/>
            <person name="Davenport L.B."/>
            <person name="Davies P."/>
            <person name="de Pablos B."/>
            <person name="Delcher A."/>
            <person name="Deng Z."/>
            <person name="Mays A.D."/>
            <person name="Dew I."/>
            <person name="Dietz S.M."/>
            <person name="Dodson K."/>
            <person name="Doup L.E."/>
            <person name="Downes M."/>
            <person name="Dugan-Rocha S."/>
            <person name="Dunkov B.C."/>
            <person name="Dunn P."/>
            <person name="Durbin K.J."/>
            <person name="Evangelista C.C."/>
            <person name="Ferraz C."/>
            <person name="Ferriera S."/>
            <person name="Fleischmann W."/>
            <person name="Fosler C."/>
            <person name="Gabrielian A.E."/>
            <person name="Garg N.S."/>
            <person name="Gelbart W.M."/>
            <person name="Glasser K."/>
            <person name="Glodek A."/>
            <person name="Gong F."/>
            <person name="Gorrell J.H."/>
            <person name="Gu Z."/>
            <person name="Guan P."/>
            <person name="Harris M."/>
            <person name="Harris N.L."/>
            <person name="Harvey D.A."/>
            <person name="Heiman T.J."/>
            <person name="Hernandez J.R."/>
            <person name="Houck J."/>
            <person name="Hostin D."/>
            <person name="Houston K.A."/>
            <person name="Howland T.J."/>
            <person name="Wei M.-H."/>
            <person name="Ibegwam C."/>
            <person name="Jalali M."/>
            <person name="Kalush F."/>
            <person name="Karpen G.H."/>
            <person name="Ke Z."/>
            <person name="Kennison J.A."/>
            <person name="Ketchum K.A."/>
            <person name="Kimmel B.E."/>
            <person name="Kodira C.D."/>
            <person name="Kraft C.L."/>
            <person name="Kravitz S."/>
            <person name="Kulp D."/>
            <person name="Lai Z."/>
            <person name="Lasko P."/>
            <person name="Lei Y."/>
            <person name="Levitsky A.A."/>
            <person name="Li J.H."/>
            <person name="Li Z."/>
            <person name="Liang Y."/>
            <person name="Lin X."/>
            <person name="Liu X."/>
            <person name="Mattei B."/>
            <person name="McIntosh T.C."/>
            <person name="McLeod M.P."/>
            <person name="McPherson D."/>
            <person name="Merkulov G."/>
            <person name="Milshina N.V."/>
            <person name="Mobarry C."/>
            <person name="Morris J."/>
            <person name="Moshrefi A."/>
            <person name="Mount S.M."/>
            <person name="Moy M."/>
            <person name="Murphy B."/>
            <person name="Murphy L."/>
            <person name="Muzny D.M."/>
            <person name="Nelson D.L."/>
            <person name="Nelson D.R."/>
            <person name="Nelson K.A."/>
            <person name="Nixon K."/>
            <person name="Nusskern D.R."/>
            <person name="Pacleb J.M."/>
            <person name="Palazzolo M."/>
            <person name="Pittman G.S."/>
            <person name="Pan S."/>
            <person name="Pollard J."/>
            <person name="Puri V."/>
            <person name="Reese M.G."/>
            <person name="Reinert K."/>
            <person name="Remington K."/>
            <person name="Saunders R.D.C."/>
            <person name="Scheeler F."/>
            <person name="Shen H."/>
            <person name="Shue B.C."/>
            <person name="Siden-Kiamos I."/>
            <person name="Simpson M."/>
            <person name="Skupski M.P."/>
            <person name="Smith T.J."/>
            <person name="Spier E."/>
            <person name="Spradling A.C."/>
            <person name="Stapleton M."/>
            <person name="Strong R."/>
            <person name="Sun E."/>
            <person name="Svirskas R."/>
            <person name="Tector C."/>
            <person name="Turner R."/>
            <person name="Venter E."/>
            <person name="Wang A.H."/>
            <person name="Wang X."/>
            <person name="Wang Z.-Y."/>
            <person name="Wassarman D.A."/>
            <person name="Weinstock G.M."/>
            <person name="Weissenbach J."/>
            <person name="Williams S.M."/>
            <person name="Woodage T."/>
            <person name="Worley K.C."/>
            <person name="Wu D."/>
            <person name="Yang S."/>
            <person name="Yao Q.A."/>
            <person name="Ye J."/>
            <person name="Yeh R.-F."/>
            <person name="Zaveri J.S."/>
            <person name="Zhan M."/>
            <person name="Zhang G."/>
            <person name="Zhao Q."/>
            <person name="Zheng L."/>
            <person name="Zheng X.H."/>
            <person name="Zhong F.N."/>
            <person name="Zhong W."/>
            <person name="Zhou X."/>
            <person name="Zhu S.C."/>
            <person name="Zhu X."/>
            <person name="Smith H.O."/>
            <person name="Gibbs R.A."/>
            <person name="Myers E.W."/>
            <person name="Rubin G.M."/>
            <person name="Venter J.C."/>
        </authorList>
    </citation>
    <scope>NUCLEOTIDE SEQUENCE [LARGE SCALE GENOMIC DNA]</scope>
    <source>
        <strain>Berkeley</strain>
    </source>
</reference>
<reference key="3">
    <citation type="journal article" date="2002" name="Genome Biol.">
        <title>Annotation of the Drosophila melanogaster euchromatic genome: a systematic review.</title>
        <authorList>
            <person name="Misra S."/>
            <person name="Crosby M.A."/>
            <person name="Mungall C.J."/>
            <person name="Matthews B.B."/>
            <person name="Campbell K.S."/>
            <person name="Hradecky P."/>
            <person name="Huang Y."/>
            <person name="Kaminker J.S."/>
            <person name="Millburn G.H."/>
            <person name="Prochnik S.E."/>
            <person name="Smith C.D."/>
            <person name="Tupy J.L."/>
            <person name="Whitfield E.J."/>
            <person name="Bayraktaroglu L."/>
            <person name="Berman B.P."/>
            <person name="Bettencourt B.R."/>
            <person name="Celniker S.E."/>
            <person name="de Grey A.D.N.J."/>
            <person name="Drysdale R.A."/>
            <person name="Harris N.L."/>
            <person name="Richter J."/>
            <person name="Russo S."/>
            <person name="Schroeder A.J."/>
            <person name="Shu S.Q."/>
            <person name="Stapleton M."/>
            <person name="Yamada C."/>
            <person name="Ashburner M."/>
            <person name="Gelbart W.M."/>
            <person name="Rubin G.M."/>
            <person name="Lewis S.E."/>
        </authorList>
    </citation>
    <scope>GENOME REANNOTATION</scope>
    <source>
        <strain>Berkeley</strain>
    </source>
</reference>
<reference key="4">
    <citation type="journal article" date="1998" name="J. Neurosci.">
        <title>A product of the Drosophila stoned locus regulates neurotransmitter release.</title>
        <authorList>
            <person name="Stimson D.T."/>
            <person name="Estes P.S."/>
            <person name="Smith M."/>
            <person name="Kelly L.E."/>
            <person name="Ramaswami M."/>
        </authorList>
    </citation>
    <scope>FUNCTION</scope>
</reference>
<reference key="5">
    <citation type="journal article" date="1999" name="J. Neurosci.">
        <title>The stoned proteins regulate synaptic vesicle recycling in the presynaptic terminal.</title>
        <authorList>
            <person name="Fergestad T."/>
            <person name="Davis W.S."/>
            <person name="Broadie K."/>
        </authorList>
    </citation>
    <scope>FUNCTION</scope>
    <scope>SUBCELLULAR LOCATION</scope>
    <scope>DEVELOPMENTAL STAGE</scope>
</reference>
<reference key="6">
    <citation type="journal article" date="2000" name="J. Neurosci.">
        <title>The products of the Drosophila stoned locus interact with synaptic vesicles via synaptotagmin.</title>
        <authorList>
            <person name="Phillips A.M."/>
            <person name="Smith M."/>
            <person name="Ramaswami M."/>
            <person name="Kelly L.E."/>
        </authorList>
    </citation>
    <scope>INTERACTION WITH SYT</scope>
    <scope>MUTANT STN-TS2</scope>
</reference>
<reference key="7">
    <citation type="journal article" date="2001" name="J. Neurosci.">
        <title>Interaction of stoned and synaptotagmin in synaptic vesicle endocytosis.</title>
        <authorList>
            <person name="Fergestad T."/>
            <person name="Broadie K."/>
        </authorList>
    </citation>
    <scope>FUNCTION</scope>
    <scope>SUBCELLULAR LOCATION</scope>
</reference>
<reference key="8">
    <citation type="journal article" date="2001" name="J. Neurosci.">
        <title>Drosophila stoned proteins regulate the rate and fidelity of synaptic vesicle internalization.</title>
        <authorList>
            <person name="Stimson D.T."/>
            <person name="Estes P.S."/>
            <person name="Rao S."/>
            <person name="Krishnan K.S."/>
            <person name="Kelly L.E."/>
            <person name="Ramaswami M."/>
        </authorList>
    </citation>
    <scope>FUNCTION</scope>
</reference>
<protein>
    <recommendedName>
        <fullName>Protein stoned-A</fullName>
        <shortName>Stn-A</shortName>
        <shortName>StonedA</shortName>
    </recommendedName>
</protein>
<proteinExistence type="evidence at protein level"/>
<name>STNA_DROME</name>
<comment type="function">
    <text evidence="3 5 6 7">Adapter protein involved in endocytic recycling of synaptic vesicles membranes. May act by mediating the retrieval of synaptotagmin protein Syt from the plasma membrane, thereby facilitating the internalization of multiple synaptic vesicles from the plasma membrane.</text>
</comment>
<comment type="subunit">
    <text evidence="4">Interacts with the second C2 domain of Syt.</text>
</comment>
<comment type="interaction">
    <interactant intactId="EBI-604915">
        <id>Q24211</id>
    </interactant>
    <interactant intactId="EBI-484504">
        <id>P21521</id>
        <label>Syt1</label>
    </interactant>
    <organismsDiffer>false</organismsDiffer>
    <experiments>2</experiments>
</comment>
<comment type="subcellular location">
    <subcellularLocation>
        <location>Cytoplasm</location>
    </subcellularLocation>
    <subcellularLocation>
        <location>Synapse</location>
    </subcellularLocation>
    <subcellularLocation>
        <location>Cytoplasmic vesicle</location>
        <location>Secretory vesicle</location>
        <location>Synaptic vesicle</location>
    </subcellularLocation>
    <text>Colocalizes with synaptic vesicle pools. Colocalizes with the endocytic network within synaptic boutons.</text>
</comment>
<comment type="developmental stage">
    <text evidence="3">Present at synaptic connections both in the CNS and in neuromuscular junctions in the mature embryo (20-22h) and throughout larval development. In the third instar larva, it is expressed in all synaptic bouton types, including I, II and III boutons.</text>
</comment>
<comment type="domain">
    <text evidence="1">The Asp-Pro-Phe (DPF) motifs, which are found in many presynatic proteins, are thought to mediate an interaction with AP-2alpha.</text>
</comment>
<comment type="miscellaneous">
    <text>StnB, which is involved in the same pathway, is derived from the same bicistronic transcript that encodes these two different proteins.</text>
</comment>
<gene>
    <name type="primary">stnA</name>
    <name type="ORF">CG12500</name>
</gene>
<evidence type="ECO:0000250" key="1"/>
<evidence type="ECO:0000256" key="2">
    <source>
        <dbReference type="SAM" id="MobiDB-lite"/>
    </source>
</evidence>
<evidence type="ECO:0000269" key="3">
    <source>
    </source>
</evidence>
<evidence type="ECO:0000269" key="4">
    <source>
    </source>
</evidence>
<evidence type="ECO:0000269" key="5">
    <source>
    </source>
</evidence>
<evidence type="ECO:0000269" key="6">
    <source>
    </source>
</evidence>
<evidence type="ECO:0000269" key="7">
    <source>
    </source>
</evidence>
<evidence type="ECO:0000305" key="8"/>
<accession>Q24211</accession>
<accession>Q7PLF2</accession>
<accession>Q9W5M8</accession>
<keyword id="KW-0963">Cytoplasm</keyword>
<keyword id="KW-0968">Cytoplasmic vesicle</keyword>
<keyword id="KW-0254">Endocytosis</keyword>
<keyword id="KW-1185">Reference proteome</keyword>
<keyword id="KW-0677">Repeat</keyword>
<keyword id="KW-0770">Synapse</keyword>
<dbReference type="EMBL" id="U54982">
    <property type="protein sequence ID" value="AAC16665.1"/>
    <property type="molecule type" value="mRNA"/>
</dbReference>
<dbReference type="EMBL" id="AE014298">
    <property type="protein sequence ID" value="EAA46058.2"/>
    <property type="molecule type" value="Genomic_DNA"/>
</dbReference>
<dbReference type="PIR" id="T13352">
    <property type="entry name" value="T13352"/>
</dbReference>
<dbReference type="RefSeq" id="NP_001036316.1">
    <property type="nucleotide sequence ID" value="NM_001042851.3"/>
</dbReference>
<dbReference type="RefSeq" id="NP_001036317.1">
    <property type="nucleotide sequence ID" value="NM_001042852.3"/>
</dbReference>
<dbReference type="RefSeq" id="NP_001285537.1">
    <property type="nucleotide sequence ID" value="NM_001298608.1"/>
</dbReference>
<dbReference type="RefSeq" id="NP_001285538.1">
    <property type="nucleotide sequence ID" value="NM_001298609.1"/>
</dbReference>
<dbReference type="SMR" id="Q24211"/>
<dbReference type="BioGRID" id="78289">
    <property type="interactions" value="2"/>
</dbReference>
<dbReference type="FunCoup" id="Q24211">
    <property type="interactions" value="5"/>
</dbReference>
<dbReference type="IntAct" id="Q24211">
    <property type="interactions" value="3"/>
</dbReference>
<dbReference type="STRING" id="7227.FBpp0310531"/>
<dbReference type="GlyGen" id="Q24211">
    <property type="glycosylation" value="1 site"/>
</dbReference>
<dbReference type="PaxDb" id="7227-FBpp0290833"/>
<dbReference type="EnsemblMetazoa" id="FBtr0301618">
    <property type="protein sequence ID" value="FBpp0290833"/>
    <property type="gene ID" value="FBgn0016976"/>
</dbReference>
<dbReference type="EnsemblMetazoa" id="FBtr0301619">
    <property type="protein sequence ID" value="FBpp0290834"/>
    <property type="gene ID" value="FBgn0016976"/>
</dbReference>
<dbReference type="EnsemblMetazoa" id="FBtr0344112">
    <property type="protein sequence ID" value="FBpp0310531"/>
    <property type="gene ID" value="FBgn0016976"/>
</dbReference>
<dbReference type="EnsemblMetazoa" id="FBtr0344465">
    <property type="protein sequence ID" value="FBpp0310836"/>
    <property type="gene ID" value="FBgn0016976"/>
</dbReference>
<dbReference type="GeneID" id="3355164"/>
<dbReference type="KEGG" id="dme:Dmel_CG12500"/>
<dbReference type="AGR" id="FB:FBgn0016976"/>
<dbReference type="CTD" id="3355164"/>
<dbReference type="FlyBase" id="FBgn0016976">
    <property type="gene designation" value="stnA"/>
</dbReference>
<dbReference type="VEuPathDB" id="VectorBase:FBgn0016976"/>
<dbReference type="eggNOG" id="ENOG502QUZ2">
    <property type="taxonomic scope" value="Eukaryota"/>
</dbReference>
<dbReference type="HOGENOM" id="CLU_014962_0_0_1"/>
<dbReference type="InParanoid" id="Q24211"/>
<dbReference type="OMA" id="NTYYAEQ"/>
<dbReference type="OrthoDB" id="6363808at2759"/>
<dbReference type="PhylomeDB" id="Q24211"/>
<dbReference type="BioGRID-ORCS" id="3355164">
    <property type="hits" value="0 hits in 1 CRISPR screen"/>
</dbReference>
<dbReference type="GenomeRNAi" id="3355164"/>
<dbReference type="PRO" id="PR:Q24211"/>
<dbReference type="Proteomes" id="UP000000803">
    <property type="component" value="Chromosome X"/>
</dbReference>
<dbReference type="Bgee" id="FBgn0016976">
    <property type="expression patterns" value="Expressed in insect adult head and 5 other cell types or tissues"/>
</dbReference>
<dbReference type="GO" id="GO:0030139">
    <property type="term" value="C:endocytic vesicle"/>
    <property type="evidence" value="ECO:0000314"/>
    <property type="project" value="UniProtKB"/>
</dbReference>
<dbReference type="GO" id="GO:0008021">
    <property type="term" value="C:synaptic vesicle"/>
    <property type="evidence" value="ECO:0000316"/>
    <property type="project" value="FlyBase"/>
</dbReference>
<dbReference type="GO" id="GO:0048488">
    <property type="term" value="P:synaptic vesicle endocytosis"/>
    <property type="evidence" value="ECO:0000315"/>
    <property type="project" value="UniProtKB"/>
</dbReference>
<dbReference type="GO" id="GO:0048489">
    <property type="term" value="P:synaptic vesicle transport"/>
    <property type="evidence" value="ECO:0000315"/>
    <property type="project" value="UniProtKB"/>
</dbReference>
<feature type="chain" id="PRO_0000072280" description="Protein stoned-A">
    <location>
        <begin position="1"/>
        <end position="850"/>
    </location>
</feature>
<feature type="region of interest" description="Disordered" evidence="2">
    <location>
        <begin position="1"/>
        <end position="95"/>
    </location>
</feature>
<feature type="region of interest" description="Interaction with Syt">
    <location>
        <begin position="26"/>
        <end position="290"/>
    </location>
</feature>
<feature type="region of interest" description="Disordered" evidence="2">
    <location>
        <begin position="125"/>
        <end position="164"/>
    </location>
</feature>
<feature type="region of interest" description="Disordered" evidence="2">
    <location>
        <begin position="345"/>
        <end position="375"/>
    </location>
</feature>
<feature type="region of interest" description="Disordered" evidence="2">
    <location>
        <begin position="412"/>
        <end position="498"/>
    </location>
</feature>
<feature type="region of interest" description="Disordered" evidence="2">
    <location>
        <begin position="573"/>
        <end position="610"/>
    </location>
</feature>
<feature type="region of interest" description="Disordered" evidence="2">
    <location>
        <begin position="634"/>
        <end position="673"/>
    </location>
</feature>
<feature type="region of interest" description="Disordered" evidence="2">
    <location>
        <begin position="738"/>
        <end position="760"/>
    </location>
</feature>
<feature type="region of interest" description="Disordered" evidence="2">
    <location>
        <begin position="800"/>
        <end position="825"/>
    </location>
</feature>
<feature type="short sequence motif" description="DPF 1">
    <location>
        <begin position="224"/>
        <end position="226"/>
    </location>
</feature>
<feature type="short sequence motif" description="DPF 2">
    <location>
        <begin position="461"/>
        <end position="463"/>
    </location>
</feature>
<feature type="short sequence motif" description="DPF 3">
    <location>
        <begin position="535"/>
        <end position="537"/>
    </location>
</feature>
<feature type="short sequence motif" description="DPF 4">
    <location>
        <begin position="666"/>
        <end position="668"/>
    </location>
</feature>
<feature type="short sequence motif" description="DPF 5">
    <location>
        <begin position="755"/>
        <end position="757"/>
    </location>
</feature>
<feature type="short sequence motif" description="DPF 6">
    <location>
        <begin position="823"/>
        <end position="825"/>
    </location>
</feature>
<feature type="compositionally biased region" description="Basic residues" evidence="2">
    <location>
        <begin position="1"/>
        <end position="16"/>
    </location>
</feature>
<feature type="compositionally biased region" description="Basic and acidic residues" evidence="2">
    <location>
        <begin position="28"/>
        <end position="38"/>
    </location>
</feature>
<feature type="compositionally biased region" description="Polar residues" evidence="2">
    <location>
        <begin position="78"/>
        <end position="91"/>
    </location>
</feature>
<feature type="compositionally biased region" description="Basic and acidic residues" evidence="2">
    <location>
        <begin position="136"/>
        <end position="164"/>
    </location>
</feature>
<feature type="compositionally biased region" description="Pro residues" evidence="2">
    <location>
        <begin position="431"/>
        <end position="440"/>
    </location>
</feature>
<feature type="compositionally biased region" description="Acidic residues" evidence="2">
    <location>
        <begin position="451"/>
        <end position="462"/>
    </location>
</feature>
<feature type="compositionally biased region" description="Basic and acidic residues" evidence="2">
    <location>
        <begin position="574"/>
        <end position="588"/>
    </location>
</feature>
<feature type="compositionally biased region" description="Basic and acidic residues" evidence="2">
    <location>
        <begin position="596"/>
        <end position="607"/>
    </location>
</feature>
<feature type="mutagenesis site" description="In stn-TS2; induce behavioral defects. Homozygous adults are viable but exhibit sluggish and uncoordinated behavior.">
    <original>K</original>
    <variation>M</variation>
    <location>
        <position position="35"/>
    </location>
</feature>
<feature type="sequence conflict" description="In Ref. 1; AAC16665." evidence="8" ref="1">
    <original>F</original>
    <variation>L</variation>
    <location>
        <position position="463"/>
    </location>
</feature>
<organism>
    <name type="scientific">Drosophila melanogaster</name>
    <name type="common">Fruit fly</name>
    <dbReference type="NCBI Taxonomy" id="7227"/>
    <lineage>
        <taxon>Eukaryota</taxon>
        <taxon>Metazoa</taxon>
        <taxon>Ecdysozoa</taxon>
        <taxon>Arthropoda</taxon>
        <taxon>Hexapoda</taxon>
        <taxon>Insecta</taxon>
        <taxon>Pterygota</taxon>
        <taxon>Neoptera</taxon>
        <taxon>Endopterygota</taxon>
        <taxon>Diptera</taxon>
        <taxon>Brachycera</taxon>
        <taxon>Muscomorpha</taxon>
        <taxon>Ephydroidea</taxon>
        <taxon>Drosophilidae</taxon>
        <taxon>Drosophila</taxon>
        <taxon>Sophophora</taxon>
    </lineage>
</organism>